<comment type="function">
    <text evidence="1">Survival and differentiation promoting protein that plays a role in the regulation of neurosynaptogenesis. Induces phosphatase PP2A activity which results in APP dephosphorylation and inhibits BACE1-mediated processing of APP.</text>
</comment>
<comment type="subunit">
    <text evidence="1">Homodimer.</text>
</comment>
<comment type="subcellular location">
    <subcellularLocation>
        <location evidence="2">Cytoplasm</location>
    </subcellularLocation>
    <subcellularLocation>
        <location evidence="2">Nucleus</location>
    </subcellularLocation>
    <text evidence="2">Mainly cytoplasmic, and nuclear at lower level.</text>
</comment>
<comment type="similarity">
    <text evidence="4">Belongs to the GPRASP family.</text>
</comment>
<comment type="caution">
    <text evidence="4">Despite its name, no basic helix-loop-helix (bHLH) domain is detected by any prediction tool.</text>
</comment>
<sequence>MTGTKNKTRAQAKTEKKPVTQAKAGAEREATGVVRPVAKTRAKAKAKTGSKTDAVAEMKAVSKNKVVAEVKEGALSEPKTLGRAMGDFSSKAGNESTSSTCENEAGIDAWFWAGEEATINSWFWNGEEAGNSSSTKNDKPEIGAQVCAEELEPAAGADCKPRSGAEEEEEENVIGNWFWEGDDTSFDPNPKPVSRIVKPQPLYEINEKNRPKDWSEVTIWPNAPAVTPAVLGFRSQAPSEASPPSYIVLASAEENACSLPGATACRPSRNTRSCSQPIPECRFDSDPCIQTIDEIRRQIRIREVNGIKPFACPCKMECYMDSEEFEKLVNLLKSTTDPLIHKIARIAMGVHNVHPFAQEFINEVGVVTLIESLLSFPSPEMRKKTVITLNPPSGDERQRKIELHVKHMCKETVSFPLNSPGQQSGLKILGQLTTDFVHHYIVANYFSELFHLLSSGNCKTRNLVLKLLLNMSENPTAARDMINMKALAALKLIFNQKEAKANLVSGVAIFINIKEHIRKGSIVVVDHLSYNTLMAIFREVKGIIETM</sequence>
<organism>
    <name type="scientific">Macaca fascicularis</name>
    <name type="common">Crab-eating macaque</name>
    <name type="synonym">Cynomolgus monkey</name>
    <dbReference type="NCBI Taxonomy" id="9541"/>
    <lineage>
        <taxon>Eukaryota</taxon>
        <taxon>Metazoa</taxon>
        <taxon>Chordata</taxon>
        <taxon>Craniata</taxon>
        <taxon>Vertebrata</taxon>
        <taxon>Euteleostomi</taxon>
        <taxon>Mammalia</taxon>
        <taxon>Eutheria</taxon>
        <taxon>Euarchontoglires</taxon>
        <taxon>Primates</taxon>
        <taxon>Haplorrhini</taxon>
        <taxon>Catarrhini</taxon>
        <taxon>Cercopithecidae</taxon>
        <taxon>Cercopithecinae</taxon>
        <taxon>Macaca</taxon>
    </lineage>
</organism>
<protein>
    <recommendedName>
        <fullName>G protein-coupled receptor associated sorting protein 3</fullName>
    </recommendedName>
    <alternativeName>
        <fullName>Protein BHLHb9</fullName>
        <shortName>bHLHb9</shortName>
    </alternativeName>
</protein>
<name>GASP3_MACFA</name>
<accession>Q9BE11</accession>
<dbReference type="EMBL" id="AB060242">
    <property type="protein sequence ID" value="BAB41169.1"/>
    <property type="molecule type" value="mRNA"/>
</dbReference>
<dbReference type="RefSeq" id="NP_001270043.1">
    <property type="nucleotide sequence ID" value="NM_001283114.1"/>
</dbReference>
<dbReference type="SMR" id="Q9BE11"/>
<dbReference type="STRING" id="9541.ENSMFAP00000014780"/>
<dbReference type="eggNOG" id="ENOG502RU0K">
    <property type="taxonomic scope" value="Eukaryota"/>
</dbReference>
<dbReference type="Proteomes" id="UP000233100">
    <property type="component" value="Unplaced"/>
</dbReference>
<dbReference type="GO" id="GO:0005829">
    <property type="term" value="C:cytosol"/>
    <property type="evidence" value="ECO:0007669"/>
    <property type="project" value="TreeGrafter"/>
</dbReference>
<dbReference type="GO" id="GO:0005634">
    <property type="term" value="C:nucleus"/>
    <property type="evidence" value="ECO:0007669"/>
    <property type="project" value="UniProtKB-SubCell"/>
</dbReference>
<dbReference type="FunFam" id="1.25.10.10:FF:000757">
    <property type="entry name" value="BHLHB9 isoform 1"/>
    <property type="match status" value="1"/>
</dbReference>
<dbReference type="Gene3D" id="1.25.10.10">
    <property type="entry name" value="Leucine-rich Repeat Variant"/>
    <property type="match status" value="1"/>
</dbReference>
<dbReference type="InterPro" id="IPR011989">
    <property type="entry name" value="ARM-like"/>
</dbReference>
<dbReference type="InterPro" id="IPR006911">
    <property type="entry name" value="ARM-rpt_dom"/>
</dbReference>
<dbReference type="InterPro" id="IPR016024">
    <property type="entry name" value="ARM-type_fold"/>
</dbReference>
<dbReference type="InterPro" id="IPR043374">
    <property type="entry name" value="GASP1-3"/>
</dbReference>
<dbReference type="PANTHER" id="PTHR46414:SF2">
    <property type="entry name" value="G PROTEIN-COUPLED RECEPTOR ASSOCIATED SORTING PROTEIN 3"/>
    <property type="match status" value="1"/>
</dbReference>
<dbReference type="PANTHER" id="PTHR46414">
    <property type="entry name" value="PROTEIN BHLHB9-RELATED"/>
    <property type="match status" value="1"/>
</dbReference>
<dbReference type="Pfam" id="PF04826">
    <property type="entry name" value="Arm_2"/>
    <property type="match status" value="1"/>
</dbReference>
<dbReference type="SUPFAM" id="SSF48371">
    <property type="entry name" value="ARM repeat"/>
    <property type="match status" value="1"/>
</dbReference>
<gene>
    <name type="primary">GPRASP3</name>
    <name type="synonym">BHLHB9</name>
    <name type="ORF">QflA-13821</name>
</gene>
<evidence type="ECO:0000250" key="1">
    <source>
        <dbReference type="UniProtKB" id="Q6PB60"/>
    </source>
</evidence>
<evidence type="ECO:0000250" key="2">
    <source>
        <dbReference type="UniProtKB" id="Q6PI77"/>
    </source>
</evidence>
<evidence type="ECO:0000256" key="3">
    <source>
        <dbReference type="SAM" id="MobiDB-lite"/>
    </source>
</evidence>
<evidence type="ECO:0000305" key="4"/>
<feature type="chain" id="PRO_0000334663" description="G protein-coupled receptor associated sorting protein 3">
    <location>
        <begin position="1"/>
        <end position="547"/>
    </location>
</feature>
<feature type="region of interest" description="Disordered" evidence="3">
    <location>
        <begin position="1"/>
        <end position="53"/>
    </location>
</feature>
<feature type="compositionally biased region" description="Basic residues" evidence="3">
    <location>
        <begin position="1"/>
        <end position="10"/>
    </location>
</feature>
<feature type="compositionally biased region" description="Basic residues" evidence="3">
    <location>
        <begin position="38"/>
        <end position="48"/>
    </location>
</feature>
<proteinExistence type="evidence at transcript level"/>
<keyword id="KW-0963">Cytoplasm</keyword>
<keyword id="KW-0539">Nucleus</keyword>
<keyword id="KW-1185">Reference proteome</keyword>
<reference key="1">
    <citation type="submission" date="2001-04" db="EMBL/GenBank/DDBJ databases">
        <title>Isolation of full-length cDNA clones from macaque brain cDNA libraries.</title>
        <authorList>
            <person name="Osada N."/>
            <person name="Hida M."/>
            <person name="Kusuda J."/>
            <person name="Tanuma R."/>
            <person name="Iseki K."/>
            <person name="Hirai M."/>
            <person name="Terao K."/>
            <person name="Suzuki Y."/>
            <person name="Sugano S."/>
            <person name="Hashimoto K."/>
        </authorList>
    </citation>
    <scope>NUCLEOTIDE SEQUENCE [LARGE SCALE MRNA]</scope>
    <source>
        <tissue>Frontal cortex</tissue>
    </source>
</reference>